<sequence length="109" mass="11816">MEVKAIHRGARISAQKTRLVADQIRGLPVDKALNVLTFSPKKAAGIVKKVVLSAIANAEHNEGADIDELKIKSIYVDKAASLKRFTARAKGRGNRIEKQSCHITVTVGN</sequence>
<protein>
    <recommendedName>
        <fullName evidence="1">Large ribosomal subunit protein uL22</fullName>
    </recommendedName>
    <alternativeName>
        <fullName evidence="2">50S ribosomal protein L22</fullName>
    </alternativeName>
</protein>
<dbReference type="EMBL" id="CP000124">
    <property type="protein sequence ID" value="ABA49164.1"/>
    <property type="molecule type" value="Genomic_DNA"/>
</dbReference>
<dbReference type="RefSeq" id="WP_004199272.1">
    <property type="nucleotide sequence ID" value="NC_007434.1"/>
</dbReference>
<dbReference type="SMR" id="Q3JMR8"/>
<dbReference type="EnsemblBacteria" id="ABA49164">
    <property type="protein sequence ID" value="ABA49164"/>
    <property type="gene ID" value="BURPS1710b_3771"/>
</dbReference>
<dbReference type="GeneID" id="98107155"/>
<dbReference type="KEGG" id="bpm:BURPS1710b_3771"/>
<dbReference type="HOGENOM" id="CLU_083987_3_3_4"/>
<dbReference type="Proteomes" id="UP000002700">
    <property type="component" value="Chromosome I"/>
</dbReference>
<dbReference type="GO" id="GO:0022625">
    <property type="term" value="C:cytosolic large ribosomal subunit"/>
    <property type="evidence" value="ECO:0007669"/>
    <property type="project" value="TreeGrafter"/>
</dbReference>
<dbReference type="GO" id="GO:0019843">
    <property type="term" value="F:rRNA binding"/>
    <property type="evidence" value="ECO:0007669"/>
    <property type="project" value="UniProtKB-UniRule"/>
</dbReference>
<dbReference type="GO" id="GO:0003735">
    <property type="term" value="F:structural constituent of ribosome"/>
    <property type="evidence" value="ECO:0007669"/>
    <property type="project" value="InterPro"/>
</dbReference>
<dbReference type="GO" id="GO:0006412">
    <property type="term" value="P:translation"/>
    <property type="evidence" value="ECO:0007669"/>
    <property type="project" value="UniProtKB-UniRule"/>
</dbReference>
<dbReference type="CDD" id="cd00336">
    <property type="entry name" value="Ribosomal_L22"/>
    <property type="match status" value="1"/>
</dbReference>
<dbReference type="FunFam" id="3.90.470.10:FF:000001">
    <property type="entry name" value="50S ribosomal protein L22"/>
    <property type="match status" value="1"/>
</dbReference>
<dbReference type="Gene3D" id="3.90.470.10">
    <property type="entry name" value="Ribosomal protein L22/L17"/>
    <property type="match status" value="1"/>
</dbReference>
<dbReference type="HAMAP" id="MF_01331_B">
    <property type="entry name" value="Ribosomal_uL22_B"/>
    <property type="match status" value="1"/>
</dbReference>
<dbReference type="InterPro" id="IPR001063">
    <property type="entry name" value="Ribosomal_uL22"/>
</dbReference>
<dbReference type="InterPro" id="IPR005727">
    <property type="entry name" value="Ribosomal_uL22_bac/chlpt-type"/>
</dbReference>
<dbReference type="InterPro" id="IPR047867">
    <property type="entry name" value="Ribosomal_uL22_bac/org-type"/>
</dbReference>
<dbReference type="InterPro" id="IPR018260">
    <property type="entry name" value="Ribosomal_uL22_CS"/>
</dbReference>
<dbReference type="InterPro" id="IPR036394">
    <property type="entry name" value="Ribosomal_uL22_sf"/>
</dbReference>
<dbReference type="NCBIfam" id="TIGR01044">
    <property type="entry name" value="rplV_bact"/>
    <property type="match status" value="1"/>
</dbReference>
<dbReference type="PANTHER" id="PTHR13501">
    <property type="entry name" value="CHLOROPLAST 50S RIBOSOMAL PROTEIN L22-RELATED"/>
    <property type="match status" value="1"/>
</dbReference>
<dbReference type="PANTHER" id="PTHR13501:SF8">
    <property type="entry name" value="LARGE RIBOSOMAL SUBUNIT PROTEIN UL22M"/>
    <property type="match status" value="1"/>
</dbReference>
<dbReference type="Pfam" id="PF00237">
    <property type="entry name" value="Ribosomal_L22"/>
    <property type="match status" value="1"/>
</dbReference>
<dbReference type="SUPFAM" id="SSF54843">
    <property type="entry name" value="Ribosomal protein L22"/>
    <property type="match status" value="1"/>
</dbReference>
<dbReference type="PROSITE" id="PS00464">
    <property type="entry name" value="RIBOSOMAL_L22"/>
    <property type="match status" value="1"/>
</dbReference>
<feature type="chain" id="PRO_0000243132" description="Large ribosomal subunit protein uL22">
    <location>
        <begin position="1"/>
        <end position="109"/>
    </location>
</feature>
<evidence type="ECO:0000255" key="1">
    <source>
        <dbReference type="HAMAP-Rule" id="MF_01331"/>
    </source>
</evidence>
<evidence type="ECO:0000305" key="2"/>
<keyword id="KW-0687">Ribonucleoprotein</keyword>
<keyword id="KW-0689">Ribosomal protein</keyword>
<keyword id="KW-0694">RNA-binding</keyword>
<keyword id="KW-0699">rRNA-binding</keyword>
<proteinExistence type="inferred from homology"/>
<name>RL22_BURP1</name>
<organism>
    <name type="scientific">Burkholderia pseudomallei (strain 1710b)</name>
    <dbReference type="NCBI Taxonomy" id="320372"/>
    <lineage>
        <taxon>Bacteria</taxon>
        <taxon>Pseudomonadati</taxon>
        <taxon>Pseudomonadota</taxon>
        <taxon>Betaproteobacteria</taxon>
        <taxon>Burkholderiales</taxon>
        <taxon>Burkholderiaceae</taxon>
        <taxon>Burkholderia</taxon>
        <taxon>pseudomallei group</taxon>
    </lineage>
</organism>
<comment type="function">
    <text evidence="1">This protein binds specifically to 23S rRNA; its binding is stimulated by other ribosomal proteins, e.g. L4, L17, and L20. It is important during the early stages of 50S assembly. It makes multiple contacts with different domains of the 23S rRNA in the assembled 50S subunit and ribosome (By similarity).</text>
</comment>
<comment type="function">
    <text evidence="1">The globular domain of the protein is located near the polypeptide exit tunnel on the outside of the subunit, while an extended beta-hairpin is found that lines the wall of the exit tunnel in the center of the 70S ribosome.</text>
</comment>
<comment type="subunit">
    <text evidence="1">Part of the 50S ribosomal subunit.</text>
</comment>
<comment type="similarity">
    <text evidence="1">Belongs to the universal ribosomal protein uL22 family.</text>
</comment>
<accession>Q3JMR8</accession>
<reference key="1">
    <citation type="journal article" date="2010" name="Genome Biol. Evol.">
        <title>Continuing evolution of Burkholderia mallei through genome reduction and large-scale rearrangements.</title>
        <authorList>
            <person name="Losada L."/>
            <person name="Ronning C.M."/>
            <person name="DeShazer D."/>
            <person name="Woods D."/>
            <person name="Fedorova N."/>
            <person name="Kim H.S."/>
            <person name="Shabalina S.A."/>
            <person name="Pearson T.R."/>
            <person name="Brinkac L."/>
            <person name="Tan P."/>
            <person name="Nandi T."/>
            <person name="Crabtree J."/>
            <person name="Badger J."/>
            <person name="Beckstrom-Sternberg S."/>
            <person name="Saqib M."/>
            <person name="Schutzer S.E."/>
            <person name="Keim P."/>
            <person name="Nierman W.C."/>
        </authorList>
    </citation>
    <scope>NUCLEOTIDE SEQUENCE [LARGE SCALE GENOMIC DNA]</scope>
    <source>
        <strain>1710b</strain>
    </source>
</reference>
<gene>
    <name evidence="1" type="primary">rplV</name>
    <name type="ordered locus">BURPS1710b_3771</name>
</gene>